<sequence>MARIAGVNIPTNKRVLIALQYIHGIGQKSAREIITKVGIEDARRVNQLTDAEVLQIRETIDRDYTVEGDLRRENSMNIKRLMDLACYRGLRHRKGLPVRGQRTHTNARTRKGPAKPIAGKKK</sequence>
<protein>
    <recommendedName>
        <fullName evidence="1">Small ribosomal subunit protein uS13</fullName>
    </recommendedName>
    <alternativeName>
        <fullName evidence="3">30S ribosomal protein S13</fullName>
    </alternativeName>
</protein>
<feature type="chain" id="PRO_1000165609" description="Small ribosomal subunit protein uS13">
    <location>
        <begin position="1"/>
        <end position="122"/>
    </location>
</feature>
<feature type="region of interest" description="Disordered" evidence="2">
    <location>
        <begin position="95"/>
        <end position="122"/>
    </location>
</feature>
<gene>
    <name evidence="1" type="primary">rpsM</name>
    <name type="ordered locus">CCNA_01328</name>
</gene>
<keyword id="KW-1185">Reference proteome</keyword>
<keyword id="KW-0687">Ribonucleoprotein</keyword>
<keyword id="KW-0689">Ribosomal protein</keyword>
<keyword id="KW-0694">RNA-binding</keyword>
<keyword id="KW-0699">rRNA-binding</keyword>
<keyword id="KW-0820">tRNA-binding</keyword>
<name>RS13_CAUVN</name>
<dbReference type="EMBL" id="CP001340">
    <property type="protein sequence ID" value="ACL94793.1"/>
    <property type="molecule type" value="Genomic_DNA"/>
</dbReference>
<dbReference type="RefSeq" id="WP_010919149.1">
    <property type="nucleotide sequence ID" value="NC_011916.1"/>
</dbReference>
<dbReference type="RefSeq" id="YP_002516701.1">
    <property type="nucleotide sequence ID" value="NC_011916.1"/>
</dbReference>
<dbReference type="SMR" id="B8H4F6"/>
<dbReference type="GeneID" id="7331783"/>
<dbReference type="KEGG" id="ccs:CCNA_01328"/>
<dbReference type="PATRIC" id="fig|565050.3.peg.1312"/>
<dbReference type="HOGENOM" id="CLU_103849_1_2_5"/>
<dbReference type="OrthoDB" id="9803610at2"/>
<dbReference type="PhylomeDB" id="B8H4F6"/>
<dbReference type="Proteomes" id="UP000001364">
    <property type="component" value="Chromosome"/>
</dbReference>
<dbReference type="GO" id="GO:0005829">
    <property type="term" value="C:cytosol"/>
    <property type="evidence" value="ECO:0007669"/>
    <property type="project" value="TreeGrafter"/>
</dbReference>
<dbReference type="GO" id="GO:0015935">
    <property type="term" value="C:small ribosomal subunit"/>
    <property type="evidence" value="ECO:0007669"/>
    <property type="project" value="TreeGrafter"/>
</dbReference>
<dbReference type="GO" id="GO:0019843">
    <property type="term" value="F:rRNA binding"/>
    <property type="evidence" value="ECO:0007669"/>
    <property type="project" value="UniProtKB-UniRule"/>
</dbReference>
<dbReference type="GO" id="GO:0003735">
    <property type="term" value="F:structural constituent of ribosome"/>
    <property type="evidence" value="ECO:0007669"/>
    <property type="project" value="InterPro"/>
</dbReference>
<dbReference type="GO" id="GO:0000049">
    <property type="term" value="F:tRNA binding"/>
    <property type="evidence" value="ECO:0007669"/>
    <property type="project" value="UniProtKB-UniRule"/>
</dbReference>
<dbReference type="GO" id="GO:0006412">
    <property type="term" value="P:translation"/>
    <property type="evidence" value="ECO:0007669"/>
    <property type="project" value="UniProtKB-UniRule"/>
</dbReference>
<dbReference type="FunFam" id="1.10.8.50:FF:000001">
    <property type="entry name" value="30S ribosomal protein S13"/>
    <property type="match status" value="1"/>
</dbReference>
<dbReference type="FunFam" id="4.10.910.10:FF:000001">
    <property type="entry name" value="30S ribosomal protein S13"/>
    <property type="match status" value="1"/>
</dbReference>
<dbReference type="Gene3D" id="1.10.8.50">
    <property type="match status" value="1"/>
</dbReference>
<dbReference type="Gene3D" id="4.10.910.10">
    <property type="entry name" value="30s ribosomal protein s13, domain 2"/>
    <property type="match status" value="1"/>
</dbReference>
<dbReference type="HAMAP" id="MF_01315">
    <property type="entry name" value="Ribosomal_uS13"/>
    <property type="match status" value="1"/>
</dbReference>
<dbReference type="InterPro" id="IPR027437">
    <property type="entry name" value="Rbsml_uS13_C"/>
</dbReference>
<dbReference type="InterPro" id="IPR001892">
    <property type="entry name" value="Ribosomal_uS13"/>
</dbReference>
<dbReference type="InterPro" id="IPR010979">
    <property type="entry name" value="Ribosomal_uS13-like_H2TH"/>
</dbReference>
<dbReference type="InterPro" id="IPR019980">
    <property type="entry name" value="Ribosomal_uS13_bac-type"/>
</dbReference>
<dbReference type="InterPro" id="IPR018269">
    <property type="entry name" value="Ribosomal_uS13_CS"/>
</dbReference>
<dbReference type="NCBIfam" id="TIGR03631">
    <property type="entry name" value="uS13_bact"/>
    <property type="match status" value="1"/>
</dbReference>
<dbReference type="PANTHER" id="PTHR10871">
    <property type="entry name" value="30S RIBOSOMAL PROTEIN S13/40S RIBOSOMAL PROTEIN S18"/>
    <property type="match status" value="1"/>
</dbReference>
<dbReference type="PANTHER" id="PTHR10871:SF1">
    <property type="entry name" value="SMALL RIBOSOMAL SUBUNIT PROTEIN US13M"/>
    <property type="match status" value="1"/>
</dbReference>
<dbReference type="Pfam" id="PF00416">
    <property type="entry name" value="Ribosomal_S13"/>
    <property type="match status" value="1"/>
</dbReference>
<dbReference type="PIRSF" id="PIRSF002134">
    <property type="entry name" value="Ribosomal_S13"/>
    <property type="match status" value="1"/>
</dbReference>
<dbReference type="SUPFAM" id="SSF46946">
    <property type="entry name" value="S13-like H2TH domain"/>
    <property type="match status" value="1"/>
</dbReference>
<dbReference type="PROSITE" id="PS00646">
    <property type="entry name" value="RIBOSOMAL_S13_1"/>
    <property type="match status" value="1"/>
</dbReference>
<dbReference type="PROSITE" id="PS50159">
    <property type="entry name" value="RIBOSOMAL_S13_2"/>
    <property type="match status" value="1"/>
</dbReference>
<evidence type="ECO:0000255" key="1">
    <source>
        <dbReference type="HAMAP-Rule" id="MF_01315"/>
    </source>
</evidence>
<evidence type="ECO:0000256" key="2">
    <source>
        <dbReference type="SAM" id="MobiDB-lite"/>
    </source>
</evidence>
<evidence type="ECO:0000305" key="3"/>
<accession>B8H4F6</accession>
<proteinExistence type="inferred from homology"/>
<comment type="function">
    <text evidence="1">Located at the top of the head of the 30S subunit, it contacts several helices of the 16S rRNA. In the 70S ribosome it contacts the 23S rRNA (bridge B1a) and protein L5 of the 50S subunit (bridge B1b), connecting the 2 subunits; these bridges are implicated in subunit movement. Contacts the tRNAs in the A and P-sites.</text>
</comment>
<comment type="subunit">
    <text evidence="1">Part of the 30S ribosomal subunit. Forms a loose heterodimer with protein S19. Forms two bridges to the 50S subunit in the 70S ribosome.</text>
</comment>
<comment type="similarity">
    <text evidence="1">Belongs to the universal ribosomal protein uS13 family.</text>
</comment>
<organism>
    <name type="scientific">Caulobacter vibrioides (strain NA1000 / CB15N)</name>
    <name type="common">Caulobacter crescentus</name>
    <dbReference type="NCBI Taxonomy" id="565050"/>
    <lineage>
        <taxon>Bacteria</taxon>
        <taxon>Pseudomonadati</taxon>
        <taxon>Pseudomonadota</taxon>
        <taxon>Alphaproteobacteria</taxon>
        <taxon>Caulobacterales</taxon>
        <taxon>Caulobacteraceae</taxon>
        <taxon>Caulobacter</taxon>
    </lineage>
</organism>
<reference key="1">
    <citation type="journal article" date="2010" name="J. Bacteriol.">
        <title>The genetic basis of laboratory adaptation in Caulobacter crescentus.</title>
        <authorList>
            <person name="Marks M.E."/>
            <person name="Castro-Rojas C.M."/>
            <person name="Teiling C."/>
            <person name="Du L."/>
            <person name="Kapatral V."/>
            <person name="Walunas T.L."/>
            <person name="Crosson S."/>
        </authorList>
    </citation>
    <scope>NUCLEOTIDE SEQUENCE [LARGE SCALE GENOMIC DNA]</scope>
    <source>
        <strain>NA1000 / CB15N</strain>
    </source>
</reference>